<dbReference type="EMBL" id="AL162506">
    <property type="protein sequence ID" value="CAB82935.1"/>
    <property type="molecule type" value="Genomic_DNA"/>
</dbReference>
<dbReference type="EMBL" id="CP002688">
    <property type="protein sequence ID" value="AED90644.1"/>
    <property type="molecule type" value="Genomic_DNA"/>
</dbReference>
<dbReference type="PIR" id="T48397">
    <property type="entry name" value="T48397"/>
</dbReference>
<dbReference type="RefSeq" id="NP_195990.1">
    <property type="nucleotide sequence ID" value="NM_120451.2"/>
</dbReference>
<dbReference type="SMR" id="Q9LZR8"/>
<dbReference type="FunCoup" id="Q9LZR8">
    <property type="interactions" value="236"/>
</dbReference>
<dbReference type="iPTMnet" id="Q9LZR8"/>
<dbReference type="PaxDb" id="3702-AT5G03700.1"/>
<dbReference type="ProteomicsDB" id="243020"/>
<dbReference type="EnsemblPlants" id="AT5G03700.1">
    <property type="protein sequence ID" value="AT5G03700.1"/>
    <property type="gene ID" value="AT5G03700"/>
</dbReference>
<dbReference type="GeneID" id="831753"/>
<dbReference type="Gramene" id="AT5G03700.1">
    <property type="protein sequence ID" value="AT5G03700.1"/>
    <property type="gene ID" value="AT5G03700"/>
</dbReference>
<dbReference type="KEGG" id="ath:AT5G03700"/>
<dbReference type="Araport" id="AT5G03700"/>
<dbReference type="TAIR" id="AT5G03700"/>
<dbReference type="eggNOG" id="ENOG502QU25">
    <property type="taxonomic scope" value="Eukaryota"/>
</dbReference>
<dbReference type="HOGENOM" id="CLU_042865_0_0_1"/>
<dbReference type="InParanoid" id="Q9LZR8"/>
<dbReference type="OMA" id="PYKDLGS"/>
<dbReference type="OrthoDB" id="590879at2759"/>
<dbReference type="PhylomeDB" id="Q9LZR8"/>
<dbReference type="PRO" id="PR:Q9LZR8"/>
<dbReference type="Proteomes" id="UP000006548">
    <property type="component" value="Chromosome 5"/>
</dbReference>
<dbReference type="ExpressionAtlas" id="Q9LZR8">
    <property type="expression patterns" value="baseline and differential"/>
</dbReference>
<dbReference type="GO" id="GO:0005768">
    <property type="term" value="C:endosome"/>
    <property type="evidence" value="ECO:0007005"/>
    <property type="project" value="TAIR"/>
</dbReference>
<dbReference type="GO" id="GO:0005794">
    <property type="term" value="C:Golgi apparatus"/>
    <property type="evidence" value="ECO:0007005"/>
    <property type="project" value="TAIR"/>
</dbReference>
<dbReference type="GO" id="GO:0016020">
    <property type="term" value="C:membrane"/>
    <property type="evidence" value="ECO:0007669"/>
    <property type="project" value="UniProtKB-SubCell"/>
</dbReference>
<dbReference type="GO" id="GO:0005802">
    <property type="term" value="C:trans-Golgi network"/>
    <property type="evidence" value="ECO:0007005"/>
    <property type="project" value="TAIR"/>
</dbReference>
<dbReference type="GO" id="GO:0048544">
    <property type="term" value="P:recognition of pollen"/>
    <property type="evidence" value="ECO:0007669"/>
    <property type="project" value="InterPro"/>
</dbReference>
<dbReference type="CDD" id="cd01098">
    <property type="entry name" value="PAN_AP_plant"/>
    <property type="match status" value="1"/>
</dbReference>
<dbReference type="Gene3D" id="2.90.10.30">
    <property type="match status" value="1"/>
</dbReference>
<dbReference type="InterPro" id="IPR036426">
    <property type="entry name" value="Bulb-type_lectin_dom_sf"/>
</dbReference>
<dbReference type="InterPro" id="IPR003609">
    <property type="entry name" value="Pan_app"/>
</dbReference>
<dbReference type="InterPro" id="IPR000858">
    <property type="entry name" value="S_locus_glycoprot_dom"/>
</dbReference>
<dbReference type="InterPro" id="IPR035446">
    <property type="entry name" value="SLSG/EP1"/>
</dbReference>
<dbReference type="PANTHER" id="PTHR47974">
    <property type="entry name" value="OS07G0415500 PROTEIN"/>
    <property type="match status" value="1"/>
</dbReference>
<dbReference type="PANTHER" id="PTHR47974:SF9">
    <property type="entry name" value="RECEPTOR-LIKE SERINE_THREONINE-PROTEIN KINASE"/>
    <property type="match status" value="1"/>
</dbReference>
<dbReference type="Pfam" id="PF00954">
    <property type="entry name" value="S_locus_glycop"/>
    <property type="match status" value="1"/>
</dbReference>
<dbReference type="PIRSF" id="PIRSF002686">
    <property type="entry name" value="SLG"/>
    <property type="match status" value="1"/>
</dbReference>
<dbReference type="SUPFAM" id="SSF51110">
    <property type="entry name" value="alpha-D-mannose-specific plant lectins"/>
    <property type="match status" value="1"/>
</dbReference>
<dbReference type="PROSITE" id="PS50948">
    <property type="entry name" value="PAN"/>
    <property type="match status" value="1"/>
</dbReference>
<name>Y5370_ARATH</name>
<sequence>MEGLCLNSFTRVLLLLFVFLVFSHKWQRVNAVEPVLELVKGFEAKPDSSIDSFQPLLTDSNGNFSFGFLRVNGSRLSLAVTHPNLTDPLWVLDPTRSASWSHKTKLFFNGSLVIIDPSSRLEWSTHTNGDRLILRNDSNLQVVKTSTFVEWESFDFPGNTLVESQNFTSAMALVSPNGLYSMRLGSDFIGLYAKVSEESQQFYWKHSALQAKAKVKDGAGPILARINPNGYLGMYQTGSIPIDVEAFNSFQRPVNGLLILRLESDGNLRGYLWDGSHWALNYEAIRETCDLPNPCGPYSLCTPGSGCSCIDNRTVIGECTHAASSPADFCDKTTEFKVVRRDGVEVPFKELMDHKTTSSLGECEEMCVDNCKCFGAVYNNGSGFCYLVNYPIRTMLGVADPSKLGYFKVREGVGKKKSRVGLTVGMSLLAVIALVLMVAMVYVGFRNWRREKRVLEEDNGLSPGPYKNLGSDSFNSVEMSRR</sequence>
<keyword id="KW-1015">Disulfide bond</keyword>
<keyword id="KW-0472">Membrane</keyword>
<keyword id="KW-1185">Reference proteome</keyword>
<keyword id="KW-0732">Signal</keyword>
<keyword id="KW-0812">Transmembrane</keyword>
<keyword id="KW-1133">Transmembrane helix</keyword>
<feature type="signal peptide" evidence="1">
    <location>
        <begin position="1"/>
        <end position="31"/>
    </location>
</feature>
<feature type="chain" id="PRO_0000312000" description="PAN domain-containing protein At5g03700">
    <location>
        <begin position="32"/>
        <end position="482"/>
    </location>
</feature>
<feature type="transmembrane region" description="Helical" evidence="1">
    <location>
        <begin position="425"/>
        <end position="445"/>
    </location>
</feature>
<feature type="domain" description="PAN" evidence="2">
    <location>
        <begin position="330"/>
        <end position="411"/>
    </location>
</feature>
<feature type="disulfide bond" evidence="2">
    <location>
        <begin position="363"/>
        <end position="385"/>
    </location>
</feature>
<feature type="disulfide bond" evidence="2">
    <location>
        <begin position="367"/>
        <end position="373"/>
    </location>
</feature>
<comment type="subcellular location">
    <subcellularLocation>
        <location evidence="3">Membrane</location>
        <topology evidence="3">Single-pass membrane protein</topology>
    </subcellularLocation>
</comment>
<protein>
    <recommendedName>
        <fullName>PAN domain-containing protein At5g03700</fullName>
    </recommendedName>
</protein>
<evidence type="ECO:0000255" key="1"/>
<evidence type="ECO:0000255" key="2">
    <source>
        <dbReference type="PROSITE-ProRule" id="PRU00315"/>
    </source>
</evidence>
<evidence type="ECO:0000305" key="3"/>
<reference key="1">
    <citation type="journal article" date="2000" name="Nature">
        <title>Sequence and analysis of chromosome 5 of the plant Arabidopsis thaliana.</title>
        <authorList>
            <person name="Tabata S."/>
            <person name="Kaneko T."/>
            <person name="Nakamura Y."/>
            <person name="Kotani H."/>
            <person name="Kato T."/>
            <person name="Asamizu E."/>
            <person name="Miyajima N."/>
            <person name="Sasamoto S."/>
            <person name="Kimura T."/>
            <person name="Hosouchi T."/>
            <person name="Kawashima K."/>
            <person name="Kohara M."/>
            <person name="Matsumoto M."/>
            <person name="Matsuno A."/>
            <person name="Muraki A."/>
            <person name="Nakayama S."/>
            <person name="Nakazaki N."/>
            <person name="Naruo K."/>
            <person name="Okumura S."/>
            <person name="Shinpo S."/>
            <person name="Takeuchi C."/>
            <person name="Wada T."/>
            <person name="Watanabe A."/>
            <person name="Yamada M."/>
            <person name="Yasuda M."/>
            <person name="Sato S."/>
            <person name="de la Bastide M."/>
            <person name="Huang E."/>
            <person name="Spiegel L."/>
            <person name="Gnoj L."/>
            <person name="O'Shaughnessy A."/>
            <person name="Preston R."/>
            <person name="Habermann K."/>
            <person name="Murray J."/>
            <person name="Johnson D."/>
            <person name="Rohlfing T."/>
            <person name="Nelson J."/>
            <person name="Stoneking T."/>
            <person name="Pepin K."/>
            <person name="Spieth J."/>
            <person name="Sekhon M."/>
            <person name="Armstrong J."/>
            <person name="Becker M."/>
            <person name="Belter E."/>
            <person name="Cordum H."/>
            <person name="Cordes M."/>
            <person name="Courtney L."/>
            <person name="Courtney W."/>
            <person name="Dante M."/>
            <person name="Du H."/>
            <person name="Edwards J."/>
            <person name="Fryman J."/>
            <person name="Haakensen B."/>
            <person name="Lamar E."/>
            <person name="Latreille P."/>
            <person name="Leonard S."/>
            <person name="Meyer R."/>
            <person name="Mulvaney E."/>
            <person name="Ozersky P."/>
            <person name="Riley A."/>
            <person name="Strowmatt C."/>
            <person name="Wagner-McPherson C."/>
            <person name="Wollam A."/>
            <person name="Yoakum M."/>
            <person name="Bell M."/>
            <person name="Dedhia N."/>
            <person name="Parnell L."/>
            <person name="Shah R."/>
            <person name="Rodriguez M."/>
            <person name="Hoon See L."/>
            <person name="Vil D."/>
            <person name="Baker J."/>
            <person name="Kirchoff K."/>
            <person name="Toth K."/>
            <person name="King L."/>
            <person name="Bahret A."/>
            <person name="Miller B."/>
            <person name="Marra M.A."/>
            <person name="Martienssen R."/>
            <person name="McCombie W.R."/>
            <person name="Wilson R.K."/>
            <person name="Murphy G."/>
            <person name="Bancroft I."/>
            <person name="Volckaert G."/>
            <person name="Wambutt R."/>
            <person name="Duesterhoeft A."/>
            <person name="Stiekema W."/>
            <person name="Pohl T."/>
            <person name="Entian K.-D."/>
            <person name="Terryn N."/>
            <person name="Hartley N."/>
            <person name="Bent E."/>
            <person name="Johnson S."/>
            <person name="Langham S.-A."/>
            <person name="McCullagh B."/>
            <person name="Robben J."/>
            <person name="Grymonprez B."/>
            <person name="Zimmermann W."/>
            <person name="Ramsperger U."/>
            <person name="Wedler H."/>
            <person name="Balke K."/>
            <person name="Wedler E."/>
            <person name="Peters S."/>
            <person name="van Staveren M."/>
            <person name="Dirkse W."/>
            <person name="Mooijman P."/>
            <person name="Klein Lankhorst R."/>
            <person name="Weitzenegger T."/>
            <person name="Bothe G."/>
            <person name="Rose M."/>
            <person name="Hauf J."/>
            <person name="Berneiser S."/>
            <person name="Hempel S."/>
            <person name="Feldpausch M."/>
            <person name="Lamberth S."/>
            <person name="Villarroel R."/>
            <person name="Gielen J."/>
            <person name="Ardiles W."/>
            <person name="Bents O."/>
            <person name="Lemcke K."/>
            <person name="Kolesov G."/>
            <person name="Mayer K.F.X."/>
            <person name="Rudd S."/>
            <person name="Schoof H."/>
            <person name="Schueller C."/>
            <person name="Zaccaria P."/>
            <person name="Mewes H.-W."/>
            <person name="Bevan M."/>
            <person name="Fransz P.F."/>
        </authorList>
    </citation>
    <scope>NUCLEOTIDE SEQUENCE [LARGE SCALE GENOMIC DNA]</scope>
    <source>
        <strain>cv. Columbia</strain>
    </source>
</reference>
<reference key="2">
    <citation type="journal article" date="2017" name="Plant J.">
        <title>Araport11: a complete reannotation of the Arabidopsis thaliana reference genome.</title>
        <authorList>
            <person name="Cheng C.Y."/>
            <person name="Krishnakumar V."/>
            <person name="Chan A.P."/>
            <person name="Thibaud-Nissen F."/>
            <person name="Schobel S."/>
            <person name="Town C.D."/>
        </authorList>
    </citation>
    <scope>GENOME REANNOTATION</scope>
    <source>
        <strain>cv. Columbia</strain>
    </source>
</reference>
<reference key="3">
    <citation type="journal article" date="2009" name="J. Proteomics">
        <title>Phosphoproteomic analysis of nuclei-enriched fractions from Arabidopsis thaliana.</title>
        <authorList>
            <person name="Jones A.M.E."/>
            <person name="MacLean D."/>
            <person name="Studholme D.J."/>
            <person name="Serna-Sanz A."/>
            <person name="Andreasson E."/>
            <person name="Rathjen J.P."/>
            <person name="Peck S.C."/>
        </authorList>
    </citation>
    <scope>IDENTIFICATION BY MASS SPECTROMETRY [LARGE SCALE ANALYSIS]</scope>
    <source>
        <strain>cv. Columbia</strain>
    </source>
</reference>
<gene>
    <name type="ordered locus">At5g03700</name>
    <name type="ORF">F17C15.120</name>
</gene>
<accession>Q9LZR8</accession>
<organism>
    <name type="scientific">Arabidopsis thaliana</name>
    <name type="common">Mouse-ear cress</name>
    <dbReference type="NCBI Taxonomy" id="3702"/>
    <lineage>
        <taxon>Eukaryota</taxon>
        <taxon>Viridiplantae</taxon>
        <taxon>Streptophyta</taxon>
        <taxon>Embryophyta</taxon>
        <taxon>Tracheophyta</taxon>
        <taxon>Spermatophyta</taxon>
        <taxon>Magnoliopsida</taxon>
        <taxon>eudicotyledons</taxon>
        <taxon>Gunneridae</taxon>
        <taxon>Pentapetalae</taxon>
        <taxon>rosids</taxon>
        <taxon>malvids</taxon>
        <taxon>Brassicales</taxon>
        <taxon>Brassicaceae</taxon>
        <taxon>Camelineae</taxon>
        <taxon>Arabidopsis</taxon>
    </lineage>
</organism>
<proteinExistence type="evidence at protein level"/>